<accession>Q5XDU4</accession>
<sequence>MSEKLVEVKDLEISFGEGKKKFVAVKNANFFIKKGETFSLVGESGSGKTTIGRAIIGLNDTSSGQILYDGKVINGRKSKSEANELIRKIQMIFQDPAASLNERATVDYIISEGLYNFNLFKTEEERKEKIKNMMAEVGLLSEHLTRYPHEFSGGQRQRIGIARALVMNPEFVIADEPISALDVSVRAQVLNLLKRMQAEKGLTYLFIAHDLSVVRFISDRIAVIHKGVIVEVAETEELFNNPIHPYTQSLLSAVPIPDPILERQKELVVYHPDQHDYTLDKPSMVEIKPNHFVWANQAEIEKYQKEL</sequence>
<dbReference type="EC" id="7.4.2.6" evidence="1"/>
<dbReference type="EMBL" id="CP000003">
    <property type="protein sequence ID" value="AAT86419.1"/>
    <property type="molecule type" value="Genomic_DNA"/>
</dbReference>
<dbReference type="RefSeq" id="WP_002986000.1">
    <property type="nucleotide sequence ID" value="NC_006086.1"/>
</dbReference>
<dbReference type="SMR" id="Q5XDU4"/>
<dbReference type="KEGG" id="spa:M6_Spy0284"/>
<dbReference type="HOGENOM" id="CLU_000604_1_23_9"/>
<dbReference type="Proteomes" id="UP000001167">
    <property type="component" value="Chromosome"/>
</dbReference>
<dbReference type="GO" id="GO:0005886">
    <property type="term" value="C:plasma membrane"/>
    <property type="evidence" value="ECO:0007669"/>
    <property type="project" value="UniProtKB-SubCell"/>
</dbReference>
<dbReference type="GO" id="GO:0005524">
    <property type="term" value="F:ATP binding"/>
    <property type="evidence" value="ECO:0007669"/>
    <property type="project" value="UniProtKB-KW"/>
</dbReference>
<dbReference type="GO" id="GO:0016887">
    <property type="term" value="F:ATP hydrolysis activity"/>
    <property type="evidence" value="ECO:0007669"/>
    <property type="project" value="InterPro"/>
</dbReference>
<dbReference type="GO" id="GO:0015833">
    <property type="term" value="P:peptide transport"/>
    <property type="evidence" value="ECO:0007669"/>
    <property type="project" value="UniProtKB-KW"/>
</dbReference>
<dbReference type="GO" id="GO:0015031">
    <property type="term" value="P:protein transport"/>
    <property type="evidence" value="ECO:0007669"/>
    <property type="project" value="UniProtKB-KW"/>
</dbReference>
<dbReference type="GO" id="GO:0055085">
    <property type="term" value="P:transmembrane transport"/>
    <property type="evidence" value="ECO:0007669"/>
    <property type="project" value="UniProtKB-ARBA"/>
</dbReference>
<dbReference type="CDD" id="cd03257">
    <property type="entry name" value="ABC_NikE_OppD_transporters"/>
    <property type="match status" value="1"/>
</dbReference>
<dbReference type="FunFam" id="3.40.50.300:FF:000016">
    <property type="entry name" value="Oligopeptide ABC transporter ATP-binding component"/>
    <property type="match status" value="1"/>
</dbReference>
<dbReference type="Gene3D" id="3.40.50.300">
    <property type="entry name" value="P-loop containing nucleotide triphosphate hydrolases"/>
    <property type="match status" value="1"/>
</dbReference>
<dbReference type="InterPro" id="IPR003593">
    <property type="entry name" value="AAA+_ATPase"/>
</dbReference>
<dbReference type="InterPro" id="IPR050319">
    <property type="entry name" value="ABC_transp_ATP-bind"/>
</dbReference>
<dbReference type="InterPro" id="IPR003439">
    <property type="entry name" value="ABC_transporter-like_ATP-bd"/>
</dbReference>
<dbReference type="InterPro" id="IPR017871">
    <property type="entry name" value="ABC_transporter-like_CS"/>
</dbReference>
<dbReference type="InterPro" id="IPR013563">
    <property type="entry name" value="Oligopep_ABC_C"/>
</dbReference>
<dbReference type="InterPro" id="IPR027417">
    <property type="entry name" value="P-loop_NTPase"/>
</dbReference>
<dbReference type="PANTHER" id="PTHR43776:SF7">
    <property type="entry name" value="D,D-DIPEPTIDE TRANSPORT ATP-BINDING PROTEIN DDPF-RELATED"/>
    <property type="match status" value="1"/>
</dbReference>
<dbReference type="PANTHER" id="PTHR43776">
    <property type="entry name" value="TRANSPORT ATP-BINDING PROTEIN"/>
    <property type="match status" value="1"/>
</dbReference>
<dbReference type="Pfam" id="PF00005">
    <property type="entry name" value="ABC_tran"/>
    <property type="match status" value="1"/>
</dbReference>
<dbReference type="Pfam" id="PF08352">
    <property type="entry name" value="oligo_HPY"/>
    <property type="match status" value="1"/>
</dbReference>
<dbReference type="SMART" id="SM00382">
    <property type="entry name" value="AAA"/>
    <property type="match status" value="1"/>
</dbReference>
<dbReference type="SUPFAM" id="SSF52540">
    <property type="entry name" value="P-loop containing nucleoside triphosphate hydrolases"/>
    <property type="match status" value="1"/>
</dbReference>
<dbReference type="PROSITE" id="PS00211">
    <property type="entry name" value="ABC_TRANSPORTER_1"/>
    <property type="match status" value="1"/>
</dbReference>
<dbReference type="PROSITE" id="PS50893">
    <property type="entry name" value="ABC_TRANSPORTER_2"/>
    <property type="match status" value="1"/>
</dbReference>
<evidence type="ECO:0000250" key="1">
    <source>
        <dbReference type="UniProtKB" id="P24137"/>
    </source>
</evidence>
<evidence type="ECO:0000255" key="2">
    <source>
        <dbReference type="PROSITE-ProRule" id="PRU00434"/>
    </source>
</evidence>
<evidence type="ECO:0000305" key="3"/>
<gene>
    <name type="primary">oppF</name>
    <name type="ordered locus">M6_Spy0284</name>
</gene>
<organism>
    <name type="scientific">Streptococcus pyogenes serotype M6 (strain ATCC BAA-946 / MGAS10394)</name>
    <dbReference type="NCBI Taxonomy" id="286636"/>
    <lineage>
        <taxon>Bacteria</taxon>
        <taxon>Bacillati</taxon>
        <taxon>Bacillota</taxon>
        <taxon>Bacilli</taxon>
        <taxon>Lactobacillales</taxon>
        <taxon>Streptococcaceae</taxon>
        <taxon>Streptococcus</taxon>
    </lineage>
</organism>
<feature type="chain" id="PRO_0000092667" description="Oligopeptide transport ATP-binding protein OppF">
    <location>
        <begin position="1"/>
        <end position="307"/>
    </location>
</feature>
<feature type="domain" description="ABC transporter" evidence="2">
    <location>
        <begin position="6"/>
        <end position="251"/>
    </location>
</feature>
<feature type="binding site" evidence="2">
    <location>
        <begin position="42"/>
        <end position="49"/>
    </location>
    <ligand>
        <name>ATP</name>
        <dbReference type="ChEBI" id="CHEBI:30616"/>
    </ligand>
</feature>
<name>OPPF_STRP6</name>
<keyword id="KW-0067">ATP-binding</keyword>
<keyword id="KW-1003">Cell membrane</keyword>
<keyword id="KW-0472">Membrane</keyword>
<keyword id="KW-0547">Nucleotide-binding</keyword>
<keyword id="KW-0571">Peptide transport</keyword>
<keyword id="KW-0653">Protein transport</keyword>
<keyword id="KW-1278">Translocase</keyword>
<keyword id="KW-0813">Transport</keyword>
<protein>
    <recommendedName>
        <fullName evidence="3">Oligopeptide transport ATP-binding protein OppF</fullName>
        <ecNumber evidence="1">7.4.2.6</ecNumber>
    </recommendedName>
</protein>
<proteinExistence type="inferred from homology"/>
<reference key="1">
    <citation type="journal article" date="2004" name="J. Infect. Dis.">
        <title>Progress toward characterization of the group A Streptococcus metagenome: complete genome sequence of a macrolide-resistant serotype M6 strain.</title>
        <authorList>
            <person name="Banks D.J."/>
            <person name="Porcella S.F."/>
            <person name="Barbian K.D."/>
            <person name="Beres S.B."/>
            <person name="Philips L.E."/>
            <person name="Voyich J.M."/>
            <person name="DeLeo F.R."/>
            <person name="Martin J.M."/>
            <person name="Somerville G.A."/>
            <person name="Musser J.M."/>
        </authorList>
    </citation>
    <scope>NUCLEOTIDE SEQUENCE [LARGE SCALE GENOMIC DNA]</scope>
    <source>
        <strain>ATCC BAA-946 / MGAS10394</strain>
    </source>
</reference>
<comment type="function">
    <text evidence="1">Part of the ABC transporter complex OppABCDF involved in the uptake of oligopeptides (By similarity). Probably responsible for energy coupling to the transport system (By similarity).</text>
</comment>
<comment type="catalytic activity">
    <reaction evidence="1">
        <text>a [peptide](out) + ATP + H2O = a [peptide](in) + ADP + phosphate + H(+)</text>
        <dbReference type="Rhea" id="RHEA:78459"/>
        <dbReference type="Rhea" id="RHEA-COMP:19083"/>
        <dbReference type="ChEBI" id="CHEBI:15377"/>
        <dbReference type="ChEBI" id="CHEBI:15378"/>
        <dbReference type="ChEBI" id="CHEBI:30616"/>
        <dbReference type="ChEBI" id="CHEBI:33710"/>
        <dbReference type="ChEBI" id="CHEBI:43474"/>
        <dbReference type="ChEBI" id="CHEBI:456216"/>
        <dbReference type="EC" id="7.4.2.6"/>
    </reaction>
    <physiologicalReaction direction="left-to-right" evidence="1">
        <dbReference type="Rhea" id="RHEA:78460"/>
    </physiologicalReaction>
</comment>
<comment type="subunit">
    <text evidence="1">The complex is composed of two ATP-binding proteins (OppD and OppF), two transmembrane proteins (OppB and OppC) and a solute-binding protein (OppA).</text>
</comment>
<comment type="subcellular location">
    <subcellularLocation>
        <location evidence="1">Cell membrane</location>
        <topology evidence="1">Peripheral membrane protein</topology>
    </subcellularLocation>
</comment>
<comment type="similarity">
    <text evidence="3">Belongs to the ABC transporter superfamily.</text>
</comment>